<evidence type="ECO:0000250" key="1">
    <source>
        <dbReference type="UniProtKB" id="Q9NWH2"/>
    </source>
</evidence>
<evidence type="ECO:0000255" key="2"/>
<evidence type="ECO:0000305" key="3"/>
<organism>
    <name type="scientific">Pongo abelii</name>
    <name type="common">Sumatran orangutan</name>
    <name type="synonym">Pongo pygmaeus abelii</name>
    <dbReference type="NCBI Taxonomy" id="9601"/>
    <lineage>
        <taxon>Eukaryota</taxon>
        <taxon>Metazoa</taxon>
        <taxon>Chordata</taxon>
        <taxon>Craniata</taxon>
        <taxon>Vertebrata</taxon>
        <taxon>Euteleostomi</taxon>
        <taxon>Mammalia</taxon>
        <taxon>Eutheria</taxon>
        <taxon>Euarchontoglires</taxon>
        <taxon>Primates</taxon>
        <taxon>Haplorrhini</taxon>
        <taxon>Catarrhini</taxon>
        <taxon>Hominidae</taxon>
        <taxon>Pongo</taxon>
    </lineage>
</organism>
<feature type="chain" id="PRO_0000295850" description="Transmembrane protein 242">
    <location>
        <begin position="1"/>
        <end position="141"/>
    </location>
</feature>
<feature type="topological domain" description="Mitochondrial matrix" evidence="1">
    <location>
        <begin position="1"/>
        <end position="29"/>
    </location>
</feature>
<feature type="transmembrane region" description="Helical" evidence="2">
    <location>
        <begin position="30"/>
        <end position="50"/>
    </location>
</feature>
<feature type="topological domain" description="Mitochondrial intermembrane" evidence="1">
    <location>
        <begin position="51"/>
        <end position="81"/>
    </location>
</feature>
<feature type="transmembrane region" description="Helical" evidence="2">
    <location>
        <begin position="82"/>
        <end position="102"/>
    </location>
</feature>
<feature type="topological domain" description="Mitochondrial matrix" evidence="1">
    <location>
        <begin position="103"/>
        <end position="141"/>
    </location>
</feature>
<feature type="modified residue" description="N-acetylmethionine" evidence="1">
    <location>
        <position position="1"/>
    </location>
</feature>
<reference key="1">
    <citation type="submission" date="2004-11" db="EMBL/GenBank/DDBJ databases">
        <authorList>
            <consortium name="The German cDNA consortium"/>
        </authorList>
    </citation>
    <scope>NUCLEOTIDE SEQUENCE [LARGE SCALE MRNA]</scope>
    <source>
        <tissue>Brain cortex</tissue>
    </source>
</reference>
<proteinExistence type="evidence at transcript level"/>
<dbReference type="EMBL" id="CR859504">
    <property type="protein sequence ID" value="CAH91673.1"/>
    <property type="molecule type" value="mRNA"/>
</dbReference>
<dbReference type="RefSeq" id="NP_001125980.1">
    <property type="nucleotide sequence ID" value="NM_001132508.1"/>
</dbReference>
<dbReference type="FunCoup" id="Q5R987">
    <property type="interactions" value="651"/>
</dbReference>
<dbReference type="STRING" id="9601.ENSPPYP00000019363"/>
<dbReference type="Ensembl" id="ENSPPYT00000020124.3">
    <property type="protein sequence ID" value="ENSPPYP00000019363.2"/>
    <property type="gene ID" value="ENSPPYG00000017271.3"/>
</dbReference>
<dbReference type="GeneID" id="100172919"/>
<dbReference type="KEGG" id="pon:100172919"/>
<dbReference type="CTD" id="729515"/>
<dbReference type="eggNOG" id="ENOG502S2GB">
    <property type="taxonomic scope" value="Eukaryota"/>
</dbReference>
<dbReference type="GeneTree" id="ENSGT00390000008642"/>
<dbReference type="HOGENOM" id="CLU_115460_0_0_1"/>
<dbReference type="InParanoid" id="Q5R987"/>
<dbReference type="OMA" id="RSPEWFN"/>
<dbReference type="OrthoDB" id="2378895at2759"/>
<dbReference type="TreeFam" id="TF323317"/>
<dbReference type="Proteomes" id="UP000001595">
    <property type="component" value="Chromosome 6"/>
</dbReference>
<dbReference type="GO" id="GO:0005743">
    <property type="term" value="C:mitochondrial inner membrane"/>
    <property type="evidence" value="ECO:0007669"/>
    <property type="project" value="UniProtKB-SubCell"/>
</dbReference>
<dbReference type="GO" id="GO:0033615">
    <property type="term" value="P:mitochondrial proton-transporting ATP synthase complex assembly"/>
    <property type="evidence" value="ECO:0007669"/>
    <property type="project" value="Ensembl"/>
</dbReference>
<dbReference type="InterPro" id="IPR009792">
    <property type="entry name" value="TMEM242"/>
</dbReference>
<dbReference type="PANTHER" id="PTHR13141">
    <property type="entry name" value="TRANSMEMBRANE PROTEIN 242"/>
    <property type="match status" value="1"/>
</dbReference>
<dbReference type="PANTHER" id="PTHR13141:SF4">
    <property type="entry name" value="TRANSMEMBRANE PROTEIN 242"/>
    <property type="match status" value="1"/>
</dbReference>
<dbReference type="Pfam" id="PF07096">
    <property type="entry name" value="DUF1358"/>
    <property type="match status" value="1"/>
</dbReference>
<name>TM242_PONAB</name>
<gene>
    <name evidence="1" type="primary">TMEM242</name>
</gene>
<accession>Q5R987</accession>
<comment type="function">
    <text evidence="1">Scaffold protein that participates in the c-ring assembly of mitochondrial ATP synthase (F(1)F(0) ATP synthase or complex V) by facilitating the membrane insertion and oligomer formation of the subunit c/ATP5MC3. Participates in the incorporation of the c-ring into vestigial complexes. Additionally influences the incorporation of subunits MT-ATP6, MT-ATP8, ATP5MJ, and ATP5MK in the ATP synthase.</text>
</comment>
<comment type="subunit">
    <text evidence="1">Interacts with the core subunits NDUFAF1, ECSIT and ACAD9 of the MCIA complex. Interacts with ATP5MC3, NDUFC2, TMEM70, MT-ND2 AND MT-ND3.</text>
</comment>
<comment type="subcellular location">
    <subcellularLocation>
        <location evidence="1">Mitochondrion inner membrane</location>
        <topology evidence="1">Multi-pass membrane protein</topology>
    </subcellularLocation>
</comment>
<comment type="similarity">
    <text evidence="3">Belongs to the TMEM242 family.</text>
</comment>
<protein>
    <recommendedName>
        <fullName evidence="1">Transmembrane protein 242</fullName>
    </recommendedName>
</protein>
<sequence>METAGAGTGQPASGLEAPGSADDRLFLVKGGIFLGTVAAAGMLAGFITTLSLAKKKSPEWFNKGSMATAALPESGSSLALRALGWGSLYAWCGVGVISFAVWKALGVHSMKDFRSKMQSIFPTIPKNSESAVEWEETLKSK</sequence>
<keyword id="KW-0007">Acetylation</keyword>
<keyword id="KW-0472">Membrane</keyword>
<keyword id="KW-0496">Mitochondrion</keyword>
<keyword id="KW-0999">Mitochondrion inner membrane</keyword>
<keyword id="KW-1185">Reference proteome</keyword>
<keyword id="KW-0812">Transmembrane</keyword>
<keyword id="KW-1133">Transmembrane helix</keyword>